<gene>
    <name type="primary">PA</name>
</gene>
<evidence type="ECO:0000250" key="1">
    <source>
        <dbReference type="UniProtKB" id="P0CK64"/>
    </source>
</evidence>
<evidence type="ECO:0000250" key="2">
    <source>
        <dbReference type="UniProtKB" id="P0CK68"/>
    </source>
</evidence>
<evidence type="ECO:0000250" key="3">
    <source>
        <dbReference type="UniProtKB" id="P0DJW8"/>
    </source>
</evidence>
<evidence type="ECO:0000250" key="4">
    <source>
        <dbReference type="UniProtKB" id="P0DXO5"/>
    </source>
</evidence>
<evidence type="ECO:0000250" key="5">
    <source>
        <dbReference type="UniProtKB" id="P0DXO6"/>
    </source>
</evidence>
<evidence type="ECO:0000305" key="6"/>
<name>PAX_I57A5</name>
<protein>
    <recommendedName>
        <fullName>Protein PA-X</fullName>
    </recommendedName>
</protein>
<comment type="function">
    <text evidence="1 4">Plays a major role in the shutoff of the host protein expression by cleaving mRNAs probably via an endonuclease activity. This host shutoff allows the virus to escape from the host antiviral response (By similarity). Hijacks host RNA splicing machinery to selectively target host RNAs containing introns for destruction. This may explain the preferential degradation of RNAs that have undergone co- or post-transcriptional processing (By similarity).</text>
</comment>
<comment type="subcellular location">
    <subcellularLocation>
        <location evidence="4">Host cytoplasm</location>
    </subcellularLocation>
    <subcellularLocation>
        <location evidence="4">Host nucleus</location>
    </subcellularLocation>
</comment>
<comment type="alternative products">
    <event type="ribosomal frameshifting"/>
    <isoform>
        <id>P0DJU6-1</id>
        <name>PA-X</name>
        <sequence type="displayed"/>
    </isoform>
    <isoform>
        <id>P13176-1</id>
        <name>PA</name>
        <sequence type="external"/>
    </isoform>
</comment>
<comment type="domain">
    <text evidence="1 4">The probable endonuclease active site in the N-terminus and the basic amino acid cluster in the C-terminus are important for the shutoff activity. The C-terminus acts as a nuclear localization signal (By similarity). The C-terminus is recruited to host protein complexes involved in nuclear Pol II RNA processing (By similarity).</text>
</comment>
<comment type="similarity">
    <text evidence="6">Belongs to the influenza viruses PA-X family.</text>
</comment>
<accession>P0DJU6</accession>
<reference key="1">
    <citation type="journal article" date="1989" name="Virology">
        <title>Evolutionary pathways of the PA genes of influenza A viruses.</title>
        <authorList>
            <person name="Okazaki K."/>
            <person name="Kawaoka Y."/>
            <person name="Webster R.G."/>
        </authorList>
    </citation>
    <scope>NUCLEOTIDE SEQUENCE [GENOMIC RNA]</scope>
</reference>
<reference key="2">
    <citation type="journal article" date="2004" name="Virology">
        <title>Genetic analysis of human H2N2 and early H3N2 influenza viruses, 1957-1972: evidence for genetic divergence and multiple reassortment events.</title>
        <authorList>
            <person name="Lindstrom S.E."/>
            <person name="Cox N.J."/>
            <person name="Klimov A."/>
        </authorList>
    </citation>
    <scope>NUCLEOTIDE SEQUENCE [GENOMIC RNA]</scope>
</reference>
<organismHost>
    <name type="scientific">Aves</name>
    <dbReference type="NCBI Taxonomy" id="8782"/>
</organismHost>
<organismHost>
    <name type="scientific">Homo sapiens</name>
    <name type="common">Human</name>
    <dbReference type="NCBI Taxonomy" id="9606"/>
</organismHost>
<proteinExistence type="inferred from homology"/>
<sequence length="252" mass="29367">MEDFVRQCFNPMIVELAERAMKEYGEDLKIETNKFAAICTHLEVCFMYSDFHFINEQGESIIVELDDPNALLKHRFEIIEGRDRTMAWTVVNSICNTTGAEKPKFLPDLYDYKENRFIEIGVTRREVHIYYLEKANKIKSEKTHIHIFSFTGEEMATKADYTLDEESRARIKTRLFTIRQEMASRGLWDSFVSPKEAKKQLKKDLKSQGQCAGSPTKVSRRTSPALRILEPMWMDSNRTATLRASFLKCPKK</sequence>
<feature type="chain" id="PRO_0000419409" description="Protein PA-X">
    <location>
        <begin position="1"/>
        <end position="252"/>
    </location>
</feature>
<feature type="active site" evidence="2">
    <location>
        <position position="80"/>
    </location>
</feature>
<feature type="active site" evidence="2">
    <location>
        <position position="108"/>
    </location>
</feature>
<feature type="site" description="Important for efficient shutoff activity" evidence="5">
    <location>
        <position position="28"/>
    </location>
</feature>
<feature type="site" description="Important for efficient shutoff activity" evidence="5">
    <location>
        <position position="65"/>
    </location>
</feature>
<feature type="site" description="Important for efficient shutoff activity and nuclear localization" evidence="4">
    <location>
        <position position="195"/>
    </location>
</feature>
<feature type="site" description="Important for efficient shutoff activity and nuclear localization" evidence="4">
    <location>
        <position position="198"/>
    </location>
</feature>
<feature type="site" description="Important for efficient shutoff activity and nuclear localization" evidence="4">
    <location>
        <position position="199"/>
    </location>
</feature>
<feature type="site" description="Important for efficient shutoff activity" evidence="3">
    <location>
        <position position="202"/>
    </location>
</feature>
<feature type="site" description="Important for efficient shutoff activity" evidence="3">
    <location>
        <position position="203"/>
    </location>
</feature>
<feature type="site" description="Important for efficient shutoff activity" evidence="3">
    <location>
        <position position="206"/>
    </location>
</feature>
<keyword id="KW-1132">Decay of host mRNAs by virus</keyword>
<keyword id="KW-1262">Eukaryotic host gene expression shutoff by virus</keyword>
<keyword id="KW-1035">Host cytoplasm</keyword>
<keyword id="KW-1190">Host gene expression shutoff by virus</keyword>
<keyword id="KW-1192">Host mRNA suppression by virus</keyword>
<keyword id="KW-1048">Host nucleus</keyword>
<keyword id="KW-0945">Host-virus interaction</keyword>
<keyword id="KW-0688">Ribosomal frameshifting</keyword>
<dbReference type="EMBL" id="M26078">
    <property type="status" value="NOT_ANNOTATED_CDS"/>
    <property type="molecule type" value="Genomic_RNA"/>
</dbReference>
<dbReference type="SMR" id="P0DJU6"/>
<dbReference type="GO" id="GO:0003723">
    <property type="term" value="F:RNA binding"/>
    <property type="evidence" value="ECO:0007669"/>
    <property type="project" value="InterPro"/>
</dbReference>
<dbReference type="GO" id="GO:0039694">
    <property type="term" value="P:viral RNA genome replication"/>
    <property type="evidence" value="ECO:0007669"/>
    <property type="project" value="InterPro"/>
</dbReference>
<dbReference type="GO" id="GO:0075523">
    <property type="term" value="P:viral translational frameshifting"/>
    <property type="evidence" value="ECO:0007669"/>
    <property type="project" value="UniProtKB-KW"/>
</dbReference>
<dbReference type="FunFam" id="3.40.91.90:FF:000001">
    <property type="entry name" value="Polymerase acidic protein"/>
    <property type="match status" value="1"/>
</dbReference>
<dbReference type="Gene3D" id="3.40.91.90">
    <property type="entry name" value="Influenza RNA-dependent RNA polymerase subunit PA, endonuclease domain"/>
    <property type="match status" value="1"/>
</dbReference>
<dbReference type="InterPro" id="IPR001009">
    <property type="entry name" value="PA/PA-X"/>
</dbReference>
<dbReference type="InterPro" id="IPR038372">
    <property type="entry name" value="PA/PA-X_sf"/>
</dbReference>
<dbReference type="Pfam" id="PF00603">
    <property type="entry name" value="Flu_PA"/>
    <property type="match status" value="1"/>
</dbReference>
<organism>
    <name type="scientific">Influenza A virus (strain A/Singapore/1/1957 H2N2)</name>
    <dbReference type="NCBI Taxonomy" id="382781"/>
    <lineage>
        <taxon>Viruses</taxon>
        <taxon>Riboviria</taxon>
        <taxon>Orthornavirae</taxon>
        <taxon>Negarnaviricota</taxon>
        <taxon>Polyploviricotina</taxon>
        <taxon>Insthoviricetes</taxon>
        <taxon>Articulavirales</taxon>
        <taxon>Orthomyxoviridae</taxon>
        <taxon>Alphainfluenzavirus</taxon>
        <taxon>Alphainfluenzavirus influenzae</taxon>
        <taxon>Influenza A virus</taxon>
    </lineage>
</organism>